<protein>
    <recommendedName>
        <fullName>Cytochrome b</fullName>
    </recommendedName>
    <alternativeName>
        <fullName>Complex III subunit 3</fullName>
    </alternativeName>
    <alternativeName>
        <fullName>Complex III subunit III</fullName>
    </alternativeName>
    <alternativeName>
        <fullName>Cytochrome b-c1 complex subunit 3</fullName>
    </alternativeName>
    <alternativeName>
        <fullName>Ubiquinol-cytochrome-c reductase complex cytochrome b subunit</fullName>
    </alternativeName>
</protein>
<gene>
    <name type="primary">mt-cyb</name>
    <name type="synonym">cob</name>
    <name type="synonym">cytb</name>
    <name type="synonym">mtcyb</name>
</gene>
<proteinExistence type="inferred from homology"/>
<comment type="function">
    <text evidence="2">Component of the ubiquinol-cytochrome c reductase complex (complex III or cytochrome b-c1 complex) that is part of the mitochondrial respiratory chain. The b-c1 complex mediates electron transfer from ubiquinol to cytochrome c. Contributes to the generation of a proton gradient across the mitochondrial membrane that is then used for ATP synthesis.</text>
</comment>
<comment type="cofactor">
    <cofactor evidence="2">
        <name>heme b</name>
        <dbReference type="ChEBI" id="CHEBI:60344"/>
    </cofactor>
    <text evidence="2">Binds 2 heme b groups non-covalently.</text>
</comment>
<comment type="subunit">
    <text evidence="2">The cytochrome bc1 complex contains 3 respiratory subunits (MT-CYB, CYC1 and UQCRFS1), 2 core proteins (UQCRC1 and UQCRC2) and probably 6 low-molecular weight proteins.</text>
</comment>
<comment type="subcellular location">
    <subcellularLocation>
        <location evidence="2">Mitochondrion inner membrane</location>
        <topology evidence="2">Multi-pass membrane protein</topology>
    </subcellularLocation>
</comment>
<comment type="miscellaneous">
    <text evidence="1">Heme 1 (or BL or b562) is low-potential and absorbs at about 562 nm, and heme 2 (or BH or b566) is high-potential and absorbs at about 566 nm.</text>
</comment>
<comment type="similarity">
    <text evidence="3">Belongs to the cytochrome b family.</text>
</comment>
<comment type="caution">
    <text evidence="2">The full-length protein contains only eight transmembrane helices, not nine as predicted by bioinformatics tools.</text>
</comment>
<organism>
    <name type="scientific">Pomoxis nigromaculatus</name>
    <name type="common">Black crappie</name>
    <name type="synonym">Cantharus nigromaculatus</name>
    <dbReference type="NCBI Taxonomy" id="8182"/>
    <lineage>
        <taxon>Eukaryota</taxon>
        <taxon>Metazoa</taxon>
        <taxon>Chordata</taxon>
        <taxon>Craniata</taxon>
        <taxon>Vertebrata</taxon>
        <taxon>Euteleostomi</taxon>
        <taxon>Actinopterygii</taxon>
        <taxon>Neopterygii</taxon>
        <taxon>Teleostei</taxon>
        <taxon>Neoteleostei</taxon>
        <taxon>Acanthomorphata</taxon>
        <taxon>Eupercaria</taxon>
        <taxon>Centrarchiformes</taxon>
        <taxon>Centrarchoidei</taxon>
        <taxon>Centrarchidae</taxon>
        <taxon>Pomoxis</taxon>
    </lineage>
</organism>
<evidence type="ECO:0000250" key="1"/>
<evidence type="ECO:0000250" key="2">
    <source>
        <dbReference type="UniProtKB" id="P00157"/>
    </source>
</evidence>
<evidence type="ECO:0000255" key="3">
    <source>
        <dbReference type="PROSITE-ProRule" id="PRU00968"/>
    </source>
</evidence>
<feature type="chain" id="PRO_0000061427" description="Cytochrome b">
    <location>
        <begin position="1" status="less than"/>
        <end position="85" status="greater than"/>
    </location>
</feature>
<feature type="transmembrane region" description="Helical" evidence="2">
    <location>
        <begin position="1" status="less than"/>
        <end position="8"/>
    </location>
</feature>
<feature type="transmembrane region" description="Helical" evidence="2">
    <location>
        <begin position="32"/>
        <end position="53"/>
    </location>
</feature>
<feature type="transmembrane region" description="Helical" evidence="2">
    <location>
        <begin position="68"/>
        <end position="85" status="greater than"/>
    </location>
</feature>
<feature type="binding site" description="axial binding residue" evidence="2">
    <location>
        <position position="38"/>
    </location>
    <ligand>
        <name>heme b</name>
        <dbReference type="ChEBI" id="CHEBI:60344"/>
        <label>b562</label>
    </ligand>
    <ligandPart>
        <name>Fe</name>
        <dbReference type="ChEBI" id="CHEBI:18248"/>
    </ligandPart>
</feature>
<feature type="binding site" description="axial binding residue" evidence="2">
    <location>
        <position position="52"/>
    </location>
    <ligand>
        <name>heme b</name>
        <dbReference type="ChEBI" id="CHEBI:60344"/>
        <label>b566</label>
    </ligand>
    <ligandPart>
        <name>Fe</name>
        <dbReference type="ChEBI" id="CHEBI:18248"/>
    </ligandPart>
</feature>
<feature type="non-terminal residue">
    <location>
        <position position="1"/>
    </location>
</feature>
<feature type="non-terminal residue">
    <location>
        <position position="85"/>
    </location>
</feature>
<accession>P29670</accession>
<name>CYB_POMNI</name>
<keyword id="KW-0249">Electron transport</keyword>
<keyword id="KW-0349">Heme</keyword>
<keyword id="KW-0408">Iron</keyword>
<keyword id="KW-0472">Membrane</keyword>
<keyword id="KW-0479">Metal-binding</keyword>
<keyword id="KW-0496">Mitochondrion</keyword>
<keyword id="KW-0999">Mitochondrion inner membrane</keyword>
<keyword id="KW-0679">Respiratory chain</keyword>
<keyword id="KW-0812">Transmembrane</keyword>
<keyword id="KW-1133">Transmembrane helix</keyword>
<keyword id="KW-0813">Transport</keyword>
<keyword id="KW-0830">Ubiquinone</keyword>
<geneLocation type="mitochondrion"/>
<sequence>LTGLFLAMHYTSDIATAFSSVAHICRDVNYGWLIRNIHANGASFFFICIYLHIGRGLYYGSYLYKETWNVGVVLLLLVMMTAFVG</sequence>
<reference key="1">
    <citation type="journal article" date="1991" name="Mol. Biol. Evol.">
        <title>Phylogenetic relationships of neopterygian fishes, inferred from mitochondrial DNA sequences.</title>
        <authorList>
            <person name="Normark B.B."/>
            <person name="McCune A.R."/>
            <person name="Harrison R.G."/>
        </authorList>
    </citation>
    <scope>NUCLEOTIDE SEQUENCE [GENOMIC DNA]</scope>
</reference>
<dbReference type="EMBL" id="M64915">
    <property type="protein sequence ID" value="AAB01479.1"/>
    <property type="molecule type" value="Genomic_DNA"/>
</dbReference>
<dbReference type="SMR" id="P29670"/>
<dbReference type="GO" id="GO:0005743">
    <property type="term" value="C:mitochondrial inner membrane"/>
    <property type="evidence" value="ECO:0007669"/>
    <property type="project" value="UniProtKB-SubCell"/>
</dbReference>
<dbReference type="GO" id="GO:0046872">
    <property type="term" value="F:metal ion binding"/>
    <property type="evidence" value="ECO:0007669"/>
    <property type="project" value="UniProtKB-KW"/>
</dbReference>
<dbReference type="GO" id="GO:0008121">
    <property type="term" value="F:ubiquinol-cytochrome-c reductase activity"/>
    <property type="evidence" value="ECO:0007669"/>
    <property type="project" value="TreeGrafter"/>
</dbReference>
<dbReference type="GO" id="GO:0006122">
    <property type="term" value="P:mitochondrial electron transport, ubiquinol to cytochrome c"/>
    <property type="evidence" value="ECO:0007669"/>
    <property type="project" value="TreeGrafter"/>
</dbReference>
<dbReference type="Gene3D" id="1.20.810.10">
    <property type="entry name" value="Cytochrome Bc1 Complex, Chain C"/>
    <property type="match status" value="1"/>
</dbReference>
<dbReference type="InterPro" id="IPR005797">
    <property type="entry name" value="Cyt_b/b6_N"/>
</dbReference>
<dbReference type="InterPro" id="IPR027387">
    <property type="entry name" value="Cytb/b6-like_sf"/>
</dbReference>
<dbReference type="InterPro" id="IPR016174">
    <property type="entry name" value="Di-haem_cyt_TM"/>
</dbReference>
<dbReference type="PANTHER" id="PTHR19271">
    <property type="entry name" value="CYTOCHROME B"/>
    <property type="match status" value="1"/>
</dbReference>
<dbReference type="PANTHER" id="PTHR19271:SF16">
    <property type="entry name" value="CYTOCHROME B"/>
    <property type="match status" value="1"/>
</dbReference>
<dbReference type="Pfam" id="PF00033">
    <property type="entry name" value="Cytochrome_B"/>
    <property type="match status" value="1"/>
</dbReference>
<dbReference type="SUPFAM" id="SSF81342">
    <property type="entry name" value="Transmembrane di-heme cytochromes"/>
    <property type="match status" value="1"/>
</dbReference>
<dbReference type="PROSITE" id="PS51002">
    <property type="entry name" value="CYTB_NTER"/>
    <property type="match status" value="1"/>
</dbReference>